<reference key="1">
    <citation type="journal article" date="1978" name="Proc. Natl. Acad. Sci. U.S.A.">
        <title>Nucleotide sequence of an insertion element, IS1.</title>
        <authorList>
            <person name="Ohtsubo H."/>
            <person name="Ohtsubo E."/>
        </authorList>
    </citation>
    <scope>NUCLEOTIDE SEQUENCE [GENOMIC DNA]</scope>
    <source>
        <plasmid>IncFII R100 (NR1)</plasmid>
    </source>
</reference>
<reference key="2">
    <citation type="journal article" date="2004" name="Antimicrob. Agents Chemother.">
        <title>Complete nucleotide sequence of a 92-kilobase plasmid harboring the CTX-M-15 extended-spectrum beta-lactamase involved in an outbreak in long-term-care facilities in Toronto, Canada.</title>
        <authorList>
            <person name="Boyd D.A."/>
            <person name="Tyler S."/>
            <person name="Christianson S."/>
            <person name="McGeer A."/>
            <person name="Muller M.P."/>
            <person name="Willey B.M."/>
            <person name="Bryce E."/>
            <person name="Gardam M."/>
            <person name="Nordmann P."/>
            <person name="Mulvey M.R."/>
        </authorList>
    </citation>
    <scope>NUCLEOTIDE SEQUENCE [GENOMIC DNA]</scope>
    <source>
        <strain>N00-0666</strain>
        <plasmid>pC15-1a</plasmid>
    </source>
</reference>
<reference key="3">
    <citation type="journal article" date="2006" name="Appl. Environ. Microbiol.">
        <title>Facile recovery of individual high-molecular-weight, low-copy-number natural plasmids for genomic sequencing.</title>
        <authorList>
            <person name="Williams L.E."/>
            <person name="Detter C."/>
            <person name="Barry K."/>
            <person name="Lapidus A."/>
            <person name="Summers A.O."/>
        </authorList>
    </citation>
    <scope>NUCLEOTIDE SEQUENCE [GENOMIC DNA]</scope>
    <source>
        <plasmid>IncFII R100 (NR1)</plasmid>
    </source>
</reference>
<reference key="4">
    <citation type="journal article" date="2007" name="Antimicrob. Agents Chemother.">
        <title>Mosaic structure of p1658/97, a 125-kilobase plasmid harboring an active amplicon with the extended-spectrum beta-lactamase gene blaSHV-5.</title>
        <authorList>
            <person name="Zienkiewicz M."/>
            <person name="Kern-Zdanowicz I."/>
            <person name="Golebiewski M."/>
            <person name="Zylinska J."/>
            <person name="Mieczkowski P."/>
            <person name="Gniadkowski M."/>
            <person name="Bardowski J."/>
            <person name="Ceglowski P."/>
        </authorList>
    </citation>
    <scope>NUCLEOTIDE SEQUENCE [GENOMIC DNA]</scope>
    <source>
        <strain>1658/97</strain>
        <plasmid>p1658/97</plasmid>
    </source>
</reference>
<evidence type="ECO:0000305" key="1"/>
<keyword id="KW-0233">DNA recombination</keyword>
<keyword id="KW-0614">Plasmid</keyword>
<keyword id="KW-0814">Transposable element</keyword>
<keyword id="KW-0815">Transposition</keyword>
<organism>
    <name type="scientific">Escherichia coli</name>
    <dbReference type="NCBI Taxonomy" id="562"/>
    <lineage>
        <taxon>Bacteria</taxon>
        <taxon>Pseudomonadati</taxon>
        <taxon>Pseudomonadota</taxon>
        <taxon>Gammaproteobacteria</taxon>
        <taxon>Enterobacterales</taxon>
        <taxon>Enterobacteriaceae</taxon>
        <taxon>Escherichia</taxon>
    </lineage>
</organism>
<comment type="function">
    <text>Absolutely required for transposition of IS1.</text>
</comment>
<comment type="similarity">
    <text evidence="1">Belongs to the IS1 elements InsA family.</text>
</comment>
<proteinExistence type="inferred from homology"/>
<feature type="chain" id="PRO_0000316160" description="Insertion element IS1 protein InsA">
    <location>
        <begin position="1"/>
        <end position="91"/>
    </location>
</feature>
<accession>P0CF06</accession>
<accession>P03827</accession>
<accession>P0ADH0</accession>
<accession>P0C651</accession>
<accession>P0C653</accession>
<accession>Q2EER2</accession>
<accession>Q2MCF5</accession>
<accession>Q2MCH2</accession>
<accession>Q933I5</accession>
<protein>
    <recommendedName>
        <fullName>Insertion element IS1 protein InsA</fullName>
    </recommendedName>
</protein>
<dbReference type="EMBL" id="V00609">
    <property type="status" value="NOT_ANNOTATED_CDS"/>
    <property type="molecule type" value="Genomic_DNA"/>
</dbReference>
<dbReference type="EMBL" id="J01730">
    <property type="protein sequence ID" value="AAA92258.1"/>
    <property type="molecule type" value="Genomic_DNA"/>
</dbReference>
<dbReference type="EMBL" id="AF550679">
    <property type="protein sequence ID" value="AAO49560.1"/>
    <property type="molecule type" value="Genomic_DNA"/>
</dbReference>
<dbReference type="EMBL" id="DQ364638">
    <property type="protein sequence ID" value="ABD59967.1"/>
    <property type="molecule type" value="Genomic_DNA"/>
</dbReference>
<dbReference type="EMBL" id="DQ364638">
    <property type="protein sequence ID" value="ABD60065.1"/>
    <property type="molecule type" value="Genomic_DNA"/>
</dbReference>
<dbReference type="EMBL" id="AF550679">
    <property type="protein sequence ID" value="AAO49626.1"/>
    <property type="molecule type" value="Genomic_DNA"/>
</dbReference>
<dbReference type="EMBL" id="AY458016">
    <property type="protein sequence ID" value="AAR25118.1"/>
    <property type="molecule type" value="Genomic_DNA"/>
</dbReference>
<dbReference type="RefSeq" id="NP_862965.1">
    <property type="nucleotide sequence ID" value="NC_004998.1"/>
</dbReference>
<dbReference type="RefSeq" id="NP_863031.1">
    <property type="nucleotide sequence ID" value="NC_004998.1"/>
</dbReference>
<dbReference type="RefSeq" id="NP_957637.1">
    <property type="nucleotide sequence ID" value="NC_005327.1"/>
</dbReference>
<dbReference type="RefSeq" id="WP_000179210.1">
    <property type="nucleotide sequence ID" value="NZ_UGES01000007.1"/>
</dbReference>
<dbReference type="RefSeq" id="YP_001096420.1">
    <property type="nucleotide sequence ID" value="NC_009133.1"/>
</dbReference>
<dbReference type="RefSeq" id="YP_001096518.1">
    <property type="nucleotide sequence ID" value="NC_009133.1"/>
</dbReference>
<dbReference type="RefSeq" id="YP_001816581.1">
    <property type="nucleotide sequence ID" value="NC_010558.1"/>
</dbReference>
<dbReference type="RefSeq" id="YP_001816635.1">
    <property type="nucleotide sequence ID" value="NC_010558.1"/>
</dbReference>
<dbReference type="RefSeq" id="YP_002527566.1">
    <property type="nucleotide sequence ID" value="NC_011964.1"/>
</dbReference>
<dbReference type="RefSeq" id="YP_003108318.1">
    <property type="nucleotide sequence ID" value="NC_013122.1"/>
</dbReference>
<dbReference type="RefSeq" id="YP_006953891.1">
    <property type="nucleotide sequence ID" value="NC_019090.1"/>
</dbReference>
<dbReference type="RefSeq" id="YP_006954228.1">
    <property type="nucleotide sequence ID" value="NC_019095.1"/>
</dbReference>
<dbReference type="RefSeq" id="YP_006990704.1">
    <property type="nucleotide sequence ID" value="NC_019424.1"/>
</dbReference>
<dbReference type="RefSeq" id="YP_007447506.1">
    <property type="nucleotide sequence ID" value="NC_020278.2"/>
</dbReference>
<dbReference type="RefSeq" id="YP_009071497.1">
    <property type="nucleotide sequence ID" value="NC_025183.1"/>
</dbReference>
<dbReference type="eggNOG" id="COG1662">
    <property type="taxonomic scope" value="Bacteria"/>
</dbReference>
<dbReference type="eggNOG" id="COG3677">
    <property type="taxonomic scope" value="Bacteria"/>
</dbReference>
<dbReference type="OMA" id="KACEPCT"/>
<dbReference type="GO" id="GO:0006313">
    <property type="term" value="P:DNA transposition"/>
    <property type="evidence" value="ECO:0007669"/>
    <property type="project" value="InterPro"/>
</dbReference>
<dbReference type="InterPro" id="IPR024431">
    <property type="entry name" value="InsA_HTH_dom"/>
</dbReference>
<dbReference type="InterPro" id="IPR003220">
    <property type="entry name" value="InsA_N_dom_Znf"/>
</dbReference>
<dbReference type="InterPro" id="IPR051252">
    <property type="entry name" value="IS1_transposase_InsA"/>
</dbReference>
<dbReference type="PANTHER" id="PTHR47923">
    <property type="entry name" value="INSERTION ELEMENT IS1 1 PROTEIN INSA-RELATED"/>
    <property type="match status" value="1"/>
</dbReference>
<dbReference type="PANTHER" id="PTHR47923:SF1">
    <property type="entry name" value="INSERTION ELEMENT IS1 1 PROTEIN INSA-RELATED"/>
    <property type="match status" value="1"/>
</dbReference>
<dbReference type="Pfam" id="PF12759">
    <property type="entry name" value="HTH_Tnp_IS1"/>
    <property type="match status" value="1"/>
</dbReference>
<dbReference type="Pfam" id="PF03811">
    <property type="entry name" value="Zn_ribbon_InsA"/>
    <property type="match status" value="1"/>
</dbReference>
<sequence length="91" mass="9902">MASVSISCPSCSATDGVVRNGKSTAGHQRYLCSHCRKTWQLQFTYTASQPGTHQKIIDMAMNGVGCRATARIMGVGLNTIFRHLKNSGRSR</sequence>
<geneLocation type="plasmid">
    <name>IncFII R100</name>
    <name>NR1</name>
</geneLocation>
<geneLocation type="plasmid">
    <name>p1658/97</name>
</geneLocation>
<geneLocation type="plasmid">
    <name>pC15-1a</name>
</geneLocation>
<name>INSA2_ECOLX</name>